<gene>
    <name type="ordered locus">Fjoh_0413</name>
</gene>
<evidence type="ECO:0000255" key="1">
    <source>
        <dbReference type="PROSITE-ProRule" id="PRU01182"/>
    </source>
</evidence>
<evidence type="ECO:0000305" key="2"/>
<dbReference type="EMBL" id="CP000685">
    <property type="protein sequence ID" value="ABQ03449.1"/>
    <property type="molecule type" value="Genomic_DNA"/>
</dbReference>
<dbReference type="RefSeq" id="WP_012022505.1">
    <property type="nucleotide sequence ID" value="NC_009441.1"/>
</dbReference>
<dbReference type="SMR" id="A5FMW5"/>
<dbReference type="STRING" id="376686.Fjoh_0413"/>
<dbReference type="KEGG" id="fjo:Fjoh_0413"/>
<dbReference type="eggNOG" id="COG2003">
    <property type="taxonomic scope" value="Bacteria"/>
</dbReference>
<dbReference type="HOGENOM" id="CLU_073529_0_2_10"/>
<dbReference type="OrthoDB" id="9804482at2"/>
<dbReference type="Proteomes" id="UP000006694">
    <property type="component" value="Chromosome"/>
</dbReference>
<dbReference type="GO" id="GO:0046872">
    <property type="term" value="F:metal ion binding"/>
    <property type="evidence" value="ECO:0007669"/>
    <property type="project" value="UniProtKB-KW"/>
</dbReference>
<dbReference type="GO" id="GO:0008237">
    <property type="term" value="F:metallopeptidase activity"/>
    <property type="evidence" value="ECO:0007669"/>
    <property type="project" value="UniProtKB-KW"/>
</dbReference>
<dbReference type="GO" id="GO:0006508">
    <property type="term" value="P:proteolysis"/>
    <property type="evidence" value="ECO:0007669"/>
    <property type="project" value="UniProtKB-KW"/>
</dbReference>
<dbReference type="CDD" id="cd08071">
    <property type="entry name" value="MPN_DUF2466"/>
    <property type="match status" value="1"/>
</dbReference>
<dbReference type="Gene3D" id="3.40.140.10">
    <property type="entry name" value="Cytidine Deaminase, domain 2"/>
    <property type="match status" value="1"/>
</dbReference>
<dbReference type="InterPro" id="IPR037518">
    <property type="entry name" value="MPN"/>
</dbReference>
<dbReference type="InterPro" id="IPR025657">
    <property type="entry name" value="RadC_JAB"/>
</dbReference>
<dbReference type="InterPro" id="IPR010994">
    <property type="entry name" value="RuvA_2-like"/>
</dbReference>
<dbReference type="InterPro" id="IPR001405">
    <property type="entry name" value="UPF0758"/>
</dbReference>
<dbReference type="InterPro" id="IPR020891">
    <property type="entry name" value="UPF0758_CS"/>
</dbReference>
<dbReference type="InterPro" id="IPR046778">
    <property type="entry name" value="UPF0758_N"/>
</dbReference>
<dbReference type="NCBIfam" id="NF000642">
    <property type="entry name" value="PRK00024.1"/>
    <property type="match status" value="1"/>
</dbReference>
<dbReference type="NCBIfam" id="TIGR00608">
    <property type="entry name" value="radc"/>
    <property type="match status" value="1"/>
</dbReference>
<dbReference type="PANTHER" id="PTHR30471">
    <property type="entry name" value="DNA REPAIR PROTEIN RADC"/>
    <property type="match status" value="1"/>
</dbReference>
<dbReference type="PANTHER" id="PTHR30471:SF3">
    <property type="entry name" value="UPF0758 PROTEIN YEES-RELATED"/>
    <property type="match status" value="1"/>
</dbReference>
<dbReference type="Pfam" id="PF04002">
    <property type="entry name" value="RadC"/>
    <property type="match status" value="1"/>
</dbReference>
<dbReference type="Pfam" id="PF20582">
    <property type="entry name" value="UPF0758_N"/>
    <property type="match status" value="1"/>
</dbReference>
<dbReference type="SUPFAM" id="SSF47781">
    <property type="entry name" value="RuvA domain 2-like"/>
    <property type="match status" value="1"/>
</dbReference>
<dbReference type="PROSITE" id="PS50249">
    <property type="entry name" value="MPN"/>
    <property type="match status" value="1"/>
</dbReference>
<dbReference type="PROSITE" id="PS01302">
    <property type="entry name" value="UPF0758"/>
    <property type="match status" value="1"/>
</dbReference>
<proteinExistence type="inferred from homology"/>
<name>Y413_FLAJ1</name>
<protein>
    <recommendedName>
        <fullName>UPF0758 protein Fjoh_0413</fullName>
    </recommendedName>
</protein>
<sequence>MEGSHFAIKDWSEDDKPREKLMLKGKEALSDAELMAILIGSGSRNESAVALSQRILASAKNLNSLWKMSVSQLIKFKGIGEAKAVSIVAALELGRRQRAEDILKLKKITSSKDAFTIMQPIIGELPHEEFWVLFLNNSNKVISKAQLSKGGIAGTIVDVRLVFKLGLENGATGLILCHNHPSGELNPSQADKQITKKIKTAGEILDVKILDHLIITETKYYSFVDEGIF</sequence>
<keyword id="KW-0378">Hydrolase</keyword>
<keyword id="KW-0479">Metal-binding</keyword>
<keyword id="KW-0482">Metalloprotease</keyword>
<keyword id="KW-0645">Protease</keyword>
<keyword id="KW-0862">Zinc</keyword>
<feature type="chain" id="PRO_1000089816" description="UPF0758 protein Fjoh_0413">
    <location>
        <begin position="1"/>
        <end position="229"/>
    </location>
</feature>
<feature type="domain" description="MPN" evidence="1">
    <location>
        <begin position="107"/>
        <end position="229"/>
    </location>
</feature>
<feature type="short sequence motif" description="JAMM motif" evidence="1">
    <location>
        <begin position="178"/>
        <end position="191"/>
    </location>
</feature>
<feature type="binding site" evidence="1">
    <location>
        <position position="178"/>
    </location>
    <ligand>
        <name>Zn(2+)</name>
        <dbReference type="ChEBI" id="CHEBI:29105"/>
        <note>catalytic</note>
    </ligand>
</feature>
<feature type="binding site" evidence="1">
    <location>
        <position position="180"/>
    </location>
    <ligand>
        <name>Zn(2+)</name>
        <dbReference type="ChEBI" id="CHEBI:29105"/>
        <note>catalytic</note>
    </ligand>
</feature>
<feature type="binding site" evidence="1">
    <location>
        <position position="191"/>
    </location>
    <ligand>
        <name>Zn(2+)</name>
        <dbReference type="ChEBI" id="CHEBI:29105"/>
        <note>catalytic</note>
    </ligand>
</feature>
<accession>A5FMW5</accession>
<reference key="1">
    <citation type="journal article" date="2009" name="Appl. Environ. Microbiol.">
        <title>Novel features of the polysaccharide-digesting gliding bacterium Flavobacterium johnsoniae as revealed by genome sequence analysis.</title>
        <authorList>
            <person name="McBride M.J."/>
            <person name="Xie G."/>
            <person name="Martens E.C."/>
            <person name="Lapidus A."/>
            <person name="Henrissat B."/>
            <person name="Rhodes R.G."/>
            <person name="Goltsman E."/>
            <person name="Wang W."/>
            <person name="Xu J."/>
            <person name="Hunnicutt D.W."/>
            <person name="Staroscik A.M."/>
            <person name="Hoover T.R."/>
            <person name="Cheng Y.Q."/>
            <person name="Stein J.L."/>
        </authorList>
    </citation>
    <scope>NUCLEOTIDE SEQUENCE [LARGE SCALE GENOMIC DNA]</scope>
    <source>
        <strain>ATCC 17061 / DSM 2064 / JCM 8514 / BCRC 14874 / CCUG 350202 / NBRC 14942 / NCIMB 11054 / UW101</strain>
    </source>
</reference>
<organism>
    <name type="scientific">Flavobacterium johnsoniae (strain ATCC 17061 / DSM 2064 / JCM 8514 / BCRC 14874 / CCUG 350202 / NBRC 14942 / NCIMB 11054 / UW101)</name>
    <name type="common">Cytophaga johnsonae</name>
    <dbReference type="NCBI Taxonomy" id="376686"/>
    <lineage>
        <taxon>Bacteria</taxon>
        <taxon>Pseudomonadati</taxon>
        <taxon>Bacteroidota</taxon>
        <taxon>Flavobacteriia</taxon>
        <taxon>Flavobacteriales</taxon>
        <taxon>Flavobacteriaceae</taxon>
        <taxon>Flavobacterium</taxon>
    </lineage>
</organism>
<comment type="similarity">
    <text evidence="2">Belongs to the UPF0758 family.</text>
</comment>